<keyword id="KW-0342">GTP-binding</keyword>
<keyword id="KW-0547">Nucleotide-binding</keyword>
<keyword id="KW-0548">Nucleotidyltransferase</keyword>
<keyword id="KW-1185">Reference proteome</keyword>
<keyword id="KW-0808">Transferase</keyword>
<sequence>MKALILVGGFGTRLRPLTLSVPKPLVDFGNKPMILHQIEALKEVGVTEVVLAINYQPEVMLNFLKDFESKLGIKITCSQETEPLGTAGPLALARDKLADGSGDPFFVLNSDVISEYPFAELIQFHKSHGGEATIMVTKVDEPSKYGVVVMEDETDKVERFVEKPKVFVGNKINAGIYLLNPSVLDRIELKPTSIEKEVFPRIAADNGLFAMVLPGFWMDIGQPRDYITGLRLYLDSLRKKAPAKLASGAHVLGNVLVHETAVIGEGCLIGPDVAVGPGCVVEAGVRLSRCTVMRGARVKKHACISSSIIGWHSTVGMWARVENMTILGEDVHVCDEVYSNGGVVLPHKEIKSSILKPEIVM</sequence>
<evidence type="ECO:0000250" key="1"/>
<evidence type="ECO:0000250" key="2">
    <source>
        <dbReference type="UniProtKB" id="O22287"/>
    </source>
</evidence>
<evidence type="ECO:0000305" key="3"/>
<protein>
    <recommendedName>
        <fullName>Probable mannose-1-phosphate guanylyltransferase 1</fullName>
        <ecNumber>2.7.7.13</ecNumber>
    </recommendedName>
</protein>
<organism>
    <name type="scientific">Oryza sativa subsp. japonica</name>
    <name type="common">Rice</name>
    <dbReference type="NCBI Taxonomy" id="39947"/>
    <lineage>
        <taxon>Eukaryota</taxon>
        <taxon>Viridiplantae</taxon>
        <taxon>Streptophyta</taxon>
        <taxon>Embryophyta</taxon>
        <taxon>Tracheophyta</taxon>
        <taxon>Spermatophyta</taxon>
        <taxon>Magnoliopsida</taxon>
        <taxon>Liliopsida</taxon>
        <taxon>Poales</taxon>
        <taxon>Poaceae</taxon>
        <taxon>BOP clade</taxon>
        <taxon>Oryzoideae</taxon>
        <taxon>Oryzeae</taxon>
        <taxon>Oryzinae</taxon>
        <taxon>Oryza</taxon>
        <taxon>Oryza sativa</taxon>
    </lineage>
</organism>
<gene>
    <name type="ordered locus">Os03g0268400</name>
    <name type="ordered locus">LOC_Os03g16150</name>
    <name type="ORF">OJA1364E02.11</name>
    <name type="ORF">OsJ_10274</name>
    <name type="ORF">OSJNBa0071M09.2</name>
</gene>
<proteinExistence type="evidence at transcript level"/>
<feature type="chain" id="PRO_0000412465" description="Probable mannose-1-phosphate guanylyltransferase 1">
    <location>
        <begin position="1"/>
        <end position="361"/>
    </location>
</feature>
<feature type="binding site" evidence="2">
    <location>
        <position position="6"/>
    </location>
    <ligand>
        <name>GDP-alpha-D-mannose</name>
        <dbReference type="ChEBI" id="CHEBI:57527"/>
    </ligand>
</feature>
<feature type="binding site" evidence="2">
    <location>
        <position position="7"/>
    </location>
    <ligand>
        <name>GDP-alpha-D-mannose</name>
        <dbReference type="ChEBI" id="CHEBI:57527"/>
    </ligand>
</feature>
<feature type="binding site" evidence="2">
    <location>
        <position position="9"/>
    </location>
    <ligand>
        <name>diphosphate</name>
        <dbReference type="ChEBI" id="CHEBI:33019"/>
    </ligand>
</feature>
<feature type="binding site" evidence="2">
    <location>
        <position position="11"/>
    </location>
    <ligand>
        <name>diphosphate</name>
        <dbReference type="ChEBI" id="CHEBI:33019"/>
    </ligand>
</feature>
<feature type="binding site" evidence="2">
    <location>
        <position position="12"/>
    </location>
    <ligand>
        <name>diphosphate</name>
        <dbReference type="ChEBI" id="CHEBI:33019"/>
    </ligand>
</feature>
<feature type="binding site" evidence="2">
    <location>
        <position position="13"/>
    </location>
    <ligand>
        <name>diphosphate</name>
        <dbReference type="ChEBI" id="CHEBI:33019"/>
    </ligand>
</feature>
<feature type="binding site" evidence="2">
    <location>
        <position position="23"/>
    </location>
    <ligand>
        <name>diphosphate</name>
        <dbReference type="ChEBI" id="CHEBI:33019"/>
    </ligand>
</feature>
<feature type="binding site" evidence="2">
    <location>
        <position position="85"/>
    </location>
    <ligand>
        <name>GDP-alpha-D-mannose</name>
        <dbReference type="ChEBI" id="CHEBI:57527"/>
    </ligand>
</feature>
<feature type="binding site" evidence="2">
    <location>
        <position position="109"/>
    </location>
    <ligand>
        <name>GDP-alpha-D-mannose</name>
        <dbReference type="ChEBI" id="CHEBI:57527"/>
    </ligand>
</feature>
<feature type="binding site" evidence="2">
    <location>
        <position position="111"/>
    </location>
    <ligand>
        <name>GDP-alpha-D-mannose</name>
        <dbReference type="ChEBI" id="CHEBI:57527"/>
    </ligand>
</feature>
<feature type="binding site" evidence="2">
    <location>
        <position position="146"/>
    </location>
    <ligand>
        <name>GDP-alpha-D-mannose</name>
        <dbReference type="ChEBI" id="CHEBI:57527"/>
    </ligand>
</feature>
<feature type="binding site" evidence="2">
    <location>
        <position position="173"/>
    </location>
    <ligand>
        <name>GDP-alpha-D-mannose</name>
        <dbReference type="ChEBI" id="CHEBI:57527"/>
    </ligand>
</feature>
<comment type="function">
    <text evidence="1">Catalyzes a reaction of the Smirnoff-Wheeler pathway, the major route to ascorbate biosynthesis in plants.</text>
</comment>
<comment type="catalytic activity">
    <reaction>
        <text>alpha-D-mannose 1-phosphate + GTP + H(+) = GDP-alpha-D-mannose + diphosphate</text>
        <dbReference type="Rhea" id="RHEA:15229"/>
        <dbReference type="ChEBI" id="CHEBI:15378"/>
        <dbReference type="ChEBI" id="CHEBI:33019"/>
        <dbReference type="ChEBI" id="CHEBI:37565"/>
        <dbReference type="ChEBI" id="CHEBI:57527"/>
        <dbReference type="ChEBI" id="CHEBI:58409"/>
        <dbReference type="EC" id="2.7.7.13"/>
    </reaction>
</comment>
<comment type="pathway">
    <text>Nucleotide-sugar biosynthesis; GDP-alpha-D-mannose biosynthesis; GDP-alpha-D-mannose from alpha-D-mannose 1-phosphate (GTP route): step 1/1.</text>
</comment>
<comment type="similarity">
    <text evidence="3">Belongs to the transferase hexapeptide repeat family.</text>
</comment>
<name>GMPP1_ORYSJ</name>
<dbReference type="EC" id="2.7.7.13"/>
<dbReference type="EMBL" id="AC135209">
    <property type="protein sequence ID" value="AAP06910.1"/>
    <property type="molecule type" value="Genomic_DNA"/>
</dbReference>
<dbReference type="EMBL" id="AC139168">
    <property type="protein sequence ID" value="AAP06900.1"/>
    <property type="molecule type" value="Genomic_DNA"/>
</dbReference>
<dbReference type="EMBL" id="DP000009">
    <property type="protein sequence ID" value="ABF95179.1"/>
    <property type="molecule type" value="Genomic_DNA"/>
</dbReference>
<dbReference type="EMBL" id="AP008209">
    <property type="protein sequence ID" value="BAF11587.1"/>
    <property type="molecule type" value="Genomic_DNA"/>
</dbReference>
<dbReference type="EMBL" id="AP014959">
    <property type="protein sequence ID" value="BAS83446.1"/>
    <property type="molecule type" value="Genomic_DNA"/>
</dbReference>
<dbReference type="EMBL" id="CM000140">
    <property type="protein sequence ID" value="EAZ26390.1"/>
    <property type="molecule type" value="Genomic_DNA"/>
</dbReference>
<dbReference type="EMBL" id="AK121972">
    <property type="protein sequence ID" value="BAH00737.1"/>
    <property type="molecule type" value="mRNA"/>
</dbReference>
<dbReference type="RefSeq" id="XP_015632712.1">
    <property type="nucleotide sequence ID" value="XM_015777226.1"/>
</dbReference>
<dbReference type="RefSeq" id="XP_015632713.1">
    <property type="nucleotide sequence ID" value="XM_015777227.1"/>
</dbReference>
<dbReference type="SMR" id="Q84JH5"/>
<dbReference type="FunCoup" id="Q84JH5">
    <property type="interactions" value="1899"/>
</dbReference>
<dbReference type="STRING" id="39947.Q84JH5"/>
<dbReference type="PaxDb" id="39947-Q84JH5"/>
<dbReference type="EnsemblPlants" id="Os03t0268400-01">
    <property type="protein sequence ID" value="Os03t0268400-01"/>
    <property type="gene ID" value="Os03g0268400"/>
</dbReference>
<dbReference type="GeneID" id="4332373"/>
<dbReference type="Gramene" id="Os03t0268400-01">
    <property type="protein sequence ID" value="Os03t0268400-01"/>
    <property type="gene ID" value="Os03g0268400"/>
</dbReference>
<dbReference type="KEGG" id="dosa:Os03g0268400"/>
<dbReference type="KEGG" id="osa:4332373"/>
<dbReference type="eggNOG" id="KOG1322">
    <property type="taxonomic scope" value="Eukaryota"/>
</dbReference>
<dbReference type="HOGENOM" id="CLU_029499_0_0_1"/>
<dbReference type="InParanoid" id="Q84JH5"/>
<dbReference type="OMA" id="EWMDCGN"/>
<dbReference type="OrthoDB" id="1733332at2759"/>
<dbReference type="BRENDA" id="2.7.7.13">
    <property type="organism ID" value="8948"/>
</dbReference>
<dbReference type="PlantReactome" id="R-OSA-1119410">
    <property type="pathway name" value="Ascorbate biosynthesis"/>
</dbReference>
<dbReference type="UniPathway" id="UPA00126">
    <property type="reaction ID" value="UER00930"/>
</dbReference>
<dbReference type="Proteomes" id="UP000000763">
    <property type="component" value="Chromosome 3"/>
</dbReference>
<dbReference type="Proteomes" id="UP000007752">
    <property type="component" value="Chromosome 3"/>
</dbReference>
<dbReference type="Proteomes" id="UP000059680">
    <property type="component" value="Chromosome 3"/>
</dbReference>
<dbReference type="ExpressionAtlas" id="Q84JH5">
    <property type="expression patterns" value="baseline and differential"/>
</dbReference>
<dbReference type="GO" id="GO:0005737">
    <property type="term" value="C:cytoplasm"/>
    <property type="evidence" value="ECO:0000318"/>
    <property type="project" value="GO_Central"/>
</dbReference>
<dbReference type="GO" id="GO:0005525">
    <property type="term" value="F:GTP binding"/>
    <property type="evidence" value="ECO:0007669"/>
    <property type="project" value="UniProtKB-KW"/>
</dbReference>
<dbReference type="GO" id="GO:0004475">
    <property type="term" value="F:mannose-1-phosphate guanylyltransferase (GTP) activity"/>
    <property type="evidence" value="ECO:0000318"/>
    <property type="project" value="GO_Central"/>
</dbReference>
<dbReference type="GO" id="GO:0009298">
    <property type="term" value="P:GDP-mannose biosynthetic process"/>
    <property type="evidence" value="ECO:0000318"/>
    <property type="project" value="GO_Central"/>
</dbReference>
<dbReference type="GO" id="GO:0006486">
    <property type="term" value="P:protein glycosylation"/>
    <property type="evidence" value="ECO:0000318"/>
    <property type="project" value="GO_Central"/>
</dbReference>
<dbReference type="CDD" id="cd06425">
    <property type="entry name" value="M1P_guanylylT_B_like_N"/>
    <property type="match status" value="1"/>
</dbReference>
<dbReference type="FunFam" id="3.90.550.10:FF:000013">
    <property type="entry name" value="mannose-1-phosphate guanyltransferase beta"/>
    <property type="match status" value="1"/>
</dbReference>
<dbReference type="Gene3D" id="2.160.10.10">
    <property type="entry name" value="Hexapeptide repeat proteins"/>
    <property type="match status" value="1"/>
</dbReference>
<dbReference type="Gene3D" id="3.90.550.10">
    <property type="entry name" value="Spore Coat Polysaccharide Biosynthesis Protein SpsA, Chain A"/>
    <property type="match status" value="1"/>
</dbReference>
<dbReference type="InterPro" id="IPR056729">
    <property type="entry name" value="GMPPB_C"/>
</dbReference>
<dbReference type="InterPro" id="IPR045233">
    <property type="entry name" value="GMPPB_N"/>
</dbReference>
<dbReference type="InterPro" id="IPR050486">
    <property type="entry name" value="Mannose-1P_guanyltransferase"/>
</dbReference>
<dbReference type="InterPro" id="IPR005835">
    <property type="entry name" value="NTP_transferase_dom"/>
</dbReference>
<dbReference type="InterPro" id="IPR029044">
    <property type="entry name" value="Nucleotide-diphossugar_trans"/>
</dbReference>
<dbReference type="PANTHER" id="PTHR22572">
    <property type="entry name" value="SUGAR-1-PHOSPHATE GUANYL TRANSFERASE"/>
    <property type="match status" value="1"/>
</dbReference>
<dbReference type="Pfam" id="PF25087">
    <property type="entry name" value="GMPPB_C"/>
    <property type="match status" value="1"/>
</dbReference>
<dbReference type="Pfam" id="PF00483">
    <property type="entry name" value="NTP_transferase"/>
    <property type="match status" value="1"/>
</dbReference>
<dbReference type="SUPFAM" id="SSF53448">
    <property type="entry name" value="Nucleotide-diphospho-sugar transferases"/>
    <property type="match status" value="1"/>
</dbReference>
<dbReference type="PROSITE" id="PS00101">
    <property type="entry name" value="HEXAPEP_TRANSFERASES"/>
    <property type="match status" value="1"/>
</dbReference>
<accession>Q84JH5</accession>
<accession>A0A0P0VW09</accession>
<reference key="1">
    <citation type="journal article" date="2005" name="Genome Res.">
        <title>Sequence, annotation, and analysis of synteny between rice chromosome 3 and diverged grass species.</title>
        <authorList>
            <consortium name="The rice chromosome 3 sequencing consortium"/>
            <person name="Buell C.R."/>
            <person name="Yuan Q."/>
            <person name="Ouyang S."/>
            <person name="Liu J."/>
            <person name="Zhu W."/>
            <person name="Wang A."/>
            <person name="Maiti R."/>
            <person name="Haas B."/>
            <person name="Wortman J."/>
            <person name="Pertea M."/>
            <person name="Jones K.M."/>
            <person name="Kim M."/>
            <person name="Overton L."/>
            <person name="Tsitrin T."/>
            <person name="Fadrosh D."/>
            <person name="Bera J."/>
            <person name="Weaver B."/>
            <person name="Jin S."/>
            <person name="Johri S."/>
            <person name="Reardon M."/>
            <person name="Webb K."/>
            <person name="Hill J."/>
            <person name="Moffat K."/>
            <person name="Tallon L."/>
            <person name="Van Aken S."/>
            <person name="Lewis M."/>
            <person name="Utterback T."/>
            <person name="Feldblyum T."/>
            <person name="Zismann V."/>
            <person name="Iobst S."/>
            <person name="Hsiao J."/>
            <person name="de Vazeille A.R."/>
            <person name="Salzberg S.L."/>
            <person name="White O."/>
            <person name="Fraser C.M."/>
            <person name="Yu Y."/>
            <person name="Kim H."/>
            <person name="Rambo T."/>
            <person name="Currie J."/>
            <person name="Collura K."/>
            <person name="Kernodle-Thompson S."/>
            <person name="Wei F."/>
            <person name="Kudrna K."/>
            <person name="Ammiraju J.S.S."/>
            <person name="Luo M."/>
            <person name="Goicoechea J.L."/>
            <person name="Wing R.A."/>
            <person name="Henry D."/>
            <person name="Oates R."/>
            <person name="Palmer M."/>
            <person name="Pries G."/>
            <person name="Saski C."/>
            <person name="Simmons J."/>
            <person name="Soderlund C."/>
            <person name="Nelson W."/>
            <person name="de la Bastide M."/>
            <person name="Spiegel L."/>
            <person name="Nascimento L."/>
            <person name="Huang E."/>
            <person name="Preston R."/>
            <person name="Zutavern T."/>
            <person name="Palmer L."/>
            <person name="O'Shaughnessy A."/>
            <person name="Dike S."/>
            <person name="McCombie W.R."/>
            <person name="Minx P."/>
            <person name="Cordum H."/>
            <person name="Wilson R."/>
            <person name="Jin W."/>
            <person name="Lee H.R."/>
            <person name="Jiang J."/>
            <person name="Jackson S."/>
        </authorList>
    </citation>
    <scope>NUCLEOTIDE SEQUENCE [LARGE SCALE GENOMIC DNA]</scope>
    <source>
        <strain>cv. Nipponbare</strain>
    </source>
</reference>
<reference key="2">
    <citation type="journal article" date="2005" name="Nature">
        <title>The map-based sequence of the rice genome.</title>
        <authorList>
            <consortium name="International rice genome sequencing project (IRGSP)"/>
        </authorList>
    </citation>
    <scope>NUCLEOTIDE SEQUENCE [LARGE SCALE GENOMIC DNA]</scope>
    <source>
        <strain>cv. Nipponbare</strain>
    </source>
</reference>
<reference key="3">
    <citation type="journal article" date="2008" name="Nucleic Acids Res.">
        <title>The rice annotation project database (RAP-DB): 2008 update.</title>
        <authorList>
            <consortium name="The rice annotation project (RAP)"/>
        </authorList>
    </citation>
    <scope>GENOME REANNOTATION</scope>
    <source>
        <strain>cv. Nipponbare</strain>
    </source>
</reference>
<reference key="4">
    <citation type="journal article" date="2013" name="Rice">
        <title>Improvement of the Oryza sativa Nipponbare reference genome using next generation sequence and optical map data.</title>
        <authorList>
            <person name="Kawahara Y."/>
            <person name="de la Bastide M."/>
            <person name="Hamilton J.P."/>
            <person name="Kanamori H."/>
            <person name="McCombie W.R."/>
            <person name="Ouyang S."/>
            <person name="Schwartz D.C."/>
            <person name="Tanaka T."/>
            <person name="Wu J."/>
            <person name="Zhou S."/>
            <person name="Childs K.L."/>
            <person name="Davidson R.M."/>
            <person name="Lin H."/>
            <person name="Quesada-Ocampo L."/>
            <person name="Vaillancourt B."/>
            <person name="Sakai H."/>
            <person name="Lee S.S."/>
            <person name="Kim J."/>
            <person name="Numa H."/>
            <person name="Itoh T."/>
            <person name="Buell C.R."/>
            <person name="Matsumoto T."/>
        </authorList>
    </citation>
    <scope>GENOME REANNOTATION</scope>
    <source>
        <strain>cv. Nipponbare</strain>
    </source>
</reference>
<reference key="5">
    <citation type="journal article" date="2005" name="PLoS Biol.">
        <title>The genomes of Oryza sativa: a history of duplications.</title>
        <authorList>
            <person name="Yu J."/>
            <person name="Wang J."/>
            <person name="Lin W."/>
            <person name="Li S."/>
            <person name="Li H."/>
            <person name="Zhou J."/>
            <person name="Ni P."/>
            <person name="Dong W."/>
            <person name="Hu S."/>
            <person name="Zeng C."/>
            <person name="Zhang J."/>
            <person name="Zhang Y."/>
            <person name="Li R."/>
            <person name="Xu Z."/>
            <person name="Li S."/>
            <person name="Li X."/>
            <person name="Zheng H."/>
            <person name="Cong L."/>
            <person name="Lin L."/>
            <person name="Yin J."/>
            <person name="Geng J."/>
            <person name="Li G."/>
            <person name="Shi J."/>
            <person name="Liu J."/>
            <person name="Lv H."/>
            <person name="Li J."/>
            <person name="Wang J."/>
            <person name="Deng Y."/>
            <person name="Ran L."/>
            <person name="Shi X."/>
            <person name="Wang X."/>
            <person name="Wu Q."/>
            <person name="Li C."/>
            <person name="Ren X."/>
            <person name="Wang J."/>
            <person name="Wang X."/>
            <person name="Li D."/>
            <person name="Liu D."/>
            <person name="Zhang X."/>
            <person name="Ji Z."/>
            <person name="Zhao W."/>
            <person name="Sun Y."/>
            <person name="Zhang Z."/>
            <person name="Bao J."/>
            <person name="Han Y."/>
            <person name="Dong L."/>
            <person name="Ji J."/>
            <person name="Chen P."/>
            <person name="Wu S."/>
            <person name="Liu J."/>
            <person name="Xiao Y."/>
            <person name="Bu D."/>
            <person name="Tan J."/>
            <person name="Yang L."/>
            <person name="Ye C."/>
            <person name="Zhang J."/>
            <person name="Xu J."/>
            <person name="Zhou Y."/>
            <person name="Yu Y."/>
            <person name="Zhang B."/>
            <person name="Zhuang S."/>
            <person name="Wei H."/>
            <person name="Liu B."/>
            <person name="Lei M."/>
            <person name="Yu H."/>
            <person name="Li Y."/>
            <person name="Xu H."/>
            <person name="Wei S."/>
            <person name="He X."/>
            <person name="Fang L."/>
            <person name="Zhang Z."/>
            <person name="Zhang Y."/>
            <person name="Huang X."/>
            <person name="Su Z."/>
            <person name="Tong W."/>
            <person name="Li J."/>
            <person name="Tong Z."/>
            <person name="Li S."/>
            <person name="Ye J."/>
            <person name="Wang L."/>
            <person name="Fang L."/>
            <person name="Lei T."/>
            <person name="Chen C.-S."/>
            <person name="Chen H.-C."/>
            <person name="Xu Z."/>
            <person name="Li H."/>
            <person name="Huang H."/>
            <person name="Zhang F."/>
            <person name="Xu H."/>
            <person name="Li N."/>
            <person name="Zhao C."/>
            <person name="Li S."/>
            <person name="Dong L."/>
            <person name="Huang Y."/>
            <person name="Li L."/>
            <person name="Xi Y."/>
            <person name="Qi Q."/>
            <person name="Li W."/>
            <person name="Zhang B."/>
            <person name="Hu W."/>
            <person name="Zhang Y."/>
            <person name="Tian X."/>
            <person name="Jiao Y."/>
            <person name="Liang X."/>
            <person name="Jin J."/>
            <person name="Gao L."/>
            <person name="Zheng W."/>
            <person name="Hao B."/>
            <person name="Liu S.-M."/>
            <person name="Wang W."/>
            <person name="Yuan L."/>
            <person name="Cao M."/>
            <person name="McDermott J."/>
            <person name="Samudrala R."/>
            <person name="Wang J."/>
            <person name="Wong G.K.-S."/>
            <person name="Yang H."/>
        </authorList>
    </citation>
    <scope>NUCLEOTIDE SEQUENCE [LARGE SCALE GENOMIC DNA]</scope>
    <source>
        <strain>cv. Nipponbare</strain>
    </source>
</reference>
<reference key="6">
    <citation type="journal article" date="2003" name="Science">
        <title>Collection, mapping, and annotation of over 28,000 cDNA clones from japonica rice.</title>
        <authorList>
            <consortium name="The rice full-length cDNA consortium"/>
        </authorList>
    </citation>
    <scope>NUCLEOTIDE SEQUENCE [LARGE SCALE MRNA]</scope>
    <source>
        <strain>cv. Nipponbare</strain>
    </source>
</reference>